<accession>Q5NHV8</accession>
<gene>
    <name evidence="1" type="primary">rplN</name>
    <name type="ordered locus">FTT_0335</name>
</gene>
<keyword id="KW-1185">Reference proteome</keyword>
<keyword id="KW-0687">Ribonucleoprotein</keyword>
<keyword id="KW-0689">Ribosomal protein</keyword>
<keyword id="KW-0694">RNA-binding</keyword>
<keyword id="KW-0699">rRNA-binding</keyword>
<feature type="chain" id="PRO_0000266485" description="Large ribosomal subunit protein uL14">
    <location>
        <begin position="1"/>
        <end position="122"/>
    </location>
</feature>
<dbReference type="EMBL" id="AJ749949">
    <property type="protein sequence ID" value="CAG44968.1"/>
    <property type="molecule type" value="Genomic_DNA"/>
</dbReference>
<dbReference type="RefSeq" id="WP_003014346.1">
    <property type="nucleotide sequence ID" value="NZ_CP010290.1"/>
</dbReference>
<dbReference type="RefSeq" id="YP_169384.1">
    <property type="nucleotide sequence ID" value="NC_006570.2"/>
</dbReference>
<dbReference type="SMR" id="Q5NHV8"/>
<dbReference type="STRING" id="177416.FTT_0335"/>
<dbReference type="DNASU" id="3192011"/>
<dbReference type="EnsemblBacteria" id="CAG44968">
    <property type="protein sequence ID" value="CAG44968"/>
    <property type="gene ID" value="FTT_0335"/>
</dbReference>
<dbReference type="GeneID" id="75264251"/>
<dbReference type="KEGG" id="ftu:FTT_0335"/>
<dbReference type="eggNOG" id="COG0093">
    <property type="taxonomic scope" value="Bacteria"/>
</dbReference>
<dbReference type="OrthoDB" id="9806379at2"/>
<dbReference type="Proteomes" id="UP000001174">
    <property type="component" value="Chromosome"/>
</dbReference>
<dbReference type="GO" id="GO:0022625">
    <property type="term" value="C:cytosolic large ribosomal subunit"/>
    <property type="evidence" value="ECO:0007669"/>
    <property type="project" value="TreeGrafter"/>
</dbReference>
<dbReference type="GO" id="GO:0070180">
    <property type="term" value="F:large ribosomal subunit rRNA binding"/>
    <property type="evidence" value="ECO:0007669"/>
    <property type="project" value="TreeGrafter"/>
</dbReference>
<dbReference type="GO" id="GO:0003735">
    <property type="term" value="F:structural constituent of ribosome"/>
    <property type="evidence" value="ECO:0007669"/>
    <property type="project" value="InterPro"/>
</dbReference>
<dbReference type="GO" id="GO:0006412">
    <property type="term" value="P:translation"/>
    <property type="evidence" value="ECO:0007669"/>
    <property type="project" value="UniProtKB-UniRule"/>
</dbReference>
<dbReference type="CDD" id="cd00337">
    <property type="entry name" value="Ribosomal_uL14"/>
    <property type="match status" value="1"/>
</dbReference>
<dbReference type="FunFam" id="2.40.150.20:FF:000001">
    <property type="entry name" value="50S ribosomal protein L14"/>
    <property type="match status" value="1"/>
</dbReference>
<dbReference type="Gene3D" id="2.40.150.20">
    <property type="entry name" value="Ribosomal protein L14"/>
    <property type="match status" value="1"/>
</dbReference>
<dbReference type="HAMAP" id="MF_01367">
    <property type="entry name" value="Ribosomal_uL14"/>
    <property type="match status" value="1"/>
</dbReference>
<dbReference type="InterPro" id="IPR000218">
    <property type="entry name" value="Ribosomal_uL14"/>
</dbReference>
<dbReference type="InterPro" id="IPR005745">
    <property type="entry name" value="Ribosomal_uL14_bac-type"/>
</dbReference>
<dbReference type="InterPro" id="IPR019972">
    <property type="entry name" value="Ribosomal_uL14_CS"/>
</dbReference>
<dbReference type="InterPro" id="IPR036853">
    <property type="entry name" value="Ribosomal_uL14_sf"/>
</dbReference>
<dbReference type="NCBIfam" id="TIGR01067">
    <property type="entry name" value="rplN_bact"/>
    <property type="match status" value="1"/>
</dbReference>
<dbReference type="PANTHER" id="PTHR11761">
    <property type="entry name" value="50S/60S RIBOSOMAL PROTEIN L14/L23"/>
    <property type="match status" value="1"/>
</dbReference>
<dbReference type="PANTHER" id="PTHR11761:SF3">
    <property type="entry name" value="LARGE RIBOSOMAL SUBUNIT PROTEIN UL14M"/>
    <property type="match status" value="1"/>
</dbReference>
<dbReference type="Pfam" id="PF00238">
    <property type="entry name" value="Ribosomal_L14"/>
    <property type="match status" value="1"/>
</dbReference>
<dbReference type="SMART" id="SM01374">
    <property type="entry name" value="Ribosomal_L14"/>
    <property type="match status" value="1"/>
</dbReference>
<dbReference type="SUPFAM" id="SSF50193">
    <property type="entry name" value="Ribosomal protein L14"/>
    <property type="match status" value="1"/>
</dbReference>
<dbReference type="PROSITE" id="PS00049">
    <property type="entry name" value="RIBOSOMAL_L14"/>
    <property type="match status" value="1"/>
</dbReference>
<comment type="function">
    <text evidence="1">Binds to 23S rRNA. Forms part of two intersubunit bridges in the 70S ribosome.</text>
</comment>
<comment type="subunit">
    <text evidence="1">Part of the 50S ribosomal subunit. Forms a cluster with proteins L3 and L19. In the 70S ribosome, L14 and L19 interact and together make contacts with the 16S rRNA in bridges B5 and B8.</text>
</comment>
<comment type="similarity">
    <text evidence="1">Belongs to the universal ribosomal protein uL14 family.</text>
</comment>
<name>RL14_FRATT</name>
<sequence>MIQMQTELQVADNSGAKRVECIKVLGGSHRRYASIGDVIKVTVKEASPRGKAKKGSVYNAVVVRTAKGVRRKDGSKVRFDGNAAVLLNANGQPIGTRIFGPVTRELRTEKFMKIVSLAPEVL</sequence>
<protein>
    <recommendedName>
        <fullName evidence="1">Large ribosomal subunit protein uL14</fullName>
    </recommendedName>
    <alternativeName>
        <fullName evidence="2">50S ribosomal protein L14</fullName>
    </alternativeName>
</protein>
<reference key="1">
    <citation type="journal article" date="2005" name="Nat. Genet.">
        <title>The complete genome sequence of Francisella tularensis, the causative agent of tularemia.</title>
        <authorList>
            <person name="Larsson P."/>
            <person name="Oyston P.C.F."/>
            <person name="Chain P."/>
            <person name="Chu M.C."/>
            <person name="Duffield M."/>
            <person name="Fuxelius H.-H."/>
            <person name="Garcia E."/>
            <person name="Haelltorp G."/>
            <person name="Johansson D."/>
            <person name="Isherwood K.E."/>
            <person name="Karp P.D."/>
            <person name="Larsson E."/>
            <person name="Liu Y."/>
            <person name="Michell S."/>
            <person name="Prior J."/>
            <person name="Prior R."/>
            <person name="Malfatti S."/>
            <person name="Sjoestedt A."/>
            <person name="Svensson K."/>
            <person name="Thompson N."/>
            <person name="Vergez L."/>
            <person name="Wagg J.K."/>
            <person name="Wren B.W."/>
            <person name="Lindler L.E."/>
            <person name="Andersson S.G.E."/>
            <person name="Forsman M."/>
            <person name="Titball R.W."/>
        </authorList>
    </citation>
    <scope>NUCLEOTIDE SEQUENCE [LARGE SCALE GENOMIC DNA]</scope>
    <source>
        <strain>SCHU S4 / Schu 4</strain>
    </source>
</reference>
<proteinExistence type="inferred from homology"/>
<organism>
    <name type="scientific">Francisella tularensis subsp. tularensis (strain SCHU S4 / Schu 4)</name>
    <dbReference type="NCBI Taxonomy" id="177416"/>
    <lineage>
        <taxon>Bacteria</taxon>
        <taxon>Pseudomonadati</taxon>
        <taxon>Pseudomonadota</taxon>
        <taxon>Gammaproteobacteria</taxon>
        <taxon>Thiotrichales</taxon>
        <taxon>Francisellaceae</taxon>
        <taxon>Francisella</taxon>
    </lineage>
</organism>
<evidence type="ECO:0000255" key="1">
    <source>
        <dbReference type="HAMAP-Rule" id="MF_01367"/>
    </source>
</evidence>
<evidence type="ECO:0000305" key="2"/>